<proteinExistence type="inferred from homology"/>
<organism>
    <name type="scientific">Sulfurimonas denitrificans (strain ATCC 33889 / DSM 1251)</name>
    <name type="common">Thiomicrospira denitrificans (strain ATCC 33889 / DSM 1251)</name>
    <dbReference type="NCBI Taxonomy" id="326298"/>
    <lineage>
        <taxon>Bacteria</taxon>
        <taxon>Pseudomonadati</taxon>
        <taxon>Campylobacterota</taxon>
        <taxon>Epsilonproteobacteria</taxon>
        <taxon>Campylobacterales</taxon>
        <taxon>Sulfurimonadaceae</taxon>
        <taxon>Sulfurimonas</taxon>
    </lineage>
</organism>
<name>RL28_SULDN</name>
<sequence length="62" mass="6952">MAKKCAISGKGPMSGNNVSHAKNRTKRRFLLNLRTVRIALDDGTTRKIKISARELRTLKKNS</sequence>
<evidence type="ECO:0000255" key="1">
    <source>
        <dbReference type="HAMAP-Rule" id="MF_00373"/>
    </source>
</evidence>
<evidence type="ECO:0000256" key="2">
    <source>
        <dbReference type="SAM" id="MobiDB-lite"/>
    </source>
</evidence>
<evidence type="ECO:0000305" key="3"/>
<protein>
    <recommendedName>
        <fullName evidence="1">Large ribosomal subunit protein bL28</fullName>
    </recommendedName>
    <alternativeName>
        <fullName evidence="3">50S ribosomal protein L28</fullName>
    </alternativeName>
</protein>
<gene>
    <name evidence="1" type="primary">rpmB</name>
    <name type="ordered locus">Suden_1602</name>
</gene>
<feature type="chain" id="PRO_1000007396" description="Large ribosomal subunit protein bL28">
    <location>
        <begin position="1"/>
        <end position="62"/>
    </location>
</feature>
<feature type="region of interest" description="Disordered" evidence="2">
    <location>
        <begin position="1"/>
        <end position="22"/>
    </location>
</feature>
<keyword id="KW-1185">Reference proteome</keyword>
<keyword id="KW-0687">Ribonucleoprotein</keyword>
<keyword id="KW-0689">Ribosomal protein</keyword>
<comment type="similarity">
    <text evidence="1">Belongs to the bacterial ribosomal protein bL28 family.</text>
</comment>
<accession>Q30Q52</accession>
<reference key="1">
    <citation type="journal article" date="2008" name="Appl. Environ. Microbiol.">
        <title>Genome of the epsilonproteobacterial chemolithoautotroph Sulfurimonas denitrificans.</title>
        <authorList>
            <person name="Sievert S.M."/>
            <person name="Scott K.M."/>
            <person name="Klotz M.G."/>
            <person name="Chain P.S.G."/>
            <person name="Hauser L.J."/>
            <person name="Hemp J."/>
            <person name="Huegler M."/>
            <person name="Land M."/>
            <person name="Lapidus A."/>
            <person name="Larimer F.W."/>
            <person name="Lucas S."/>
            <person name="Malfatti S.A."/>
            <person name="Meyer F."/>
            <person name="Paulsen I.T."/>
            <person name="Ren Q."/>
            <person name="Simon J."/>
            <person name="Bailey K."/>
            <person name="Diaz E."/>
            <person name="Fitzpatrick K.A."/>
            <person name="Glover B."/>
            <person name="Gwatney N."/>
            <person name="Korajkic A."/>
            <person name="Long A."/>
            <person name="Mobberley J.M."/>
            <person name="Pantry S.N."/>
            <person name="Pazder G."/>
            <person name="Peterson S."/>
            <person name="Quintanilla J.D."/>
            <person name="Sprinkle R."/>
            <person name="Stephens J."/>
            <person name="Thomas P."/>
            <person name="Vaughn R."/>
            <person name="Weber M.J."/>
            <person name="Wooten L.L."/>
        </authorList>
    </citation>
    <scope>NUCLEOTIDE SEQUENCE [LARGE SCALE GENOMIC DNA]</scope>
    <source>
        <strain>ATCC 33889 / DSM 1251</strain>
    </source>
</reference>
<dbReference type="EMBL" id="CP000153">
    <property type="protein sequence ID" value="ABB44879.1"/>
    <property type="molecule type" value="Genomic_DNA"/>
</dbReference>
<dbReference type="RefSeq" id="WP_011373220.1">
    <property type="nucleotide sequence ID" value="NC_007575.1"/>
</dbReference>
<dbReference type="SMR" id="Q30Q52"/>
<dbReference type="STRING" id="326298.Suden_1602"/>
<dbReference type="KEGG" id="tdn:Suden_1602"/>
<dbReference type="eggNOG" id="COG0227">
    <property type="taxonomic scope" value="Bacteria"/>
</dbReference>
<dbReference type="HOGENOM" id="CLU_064548_7_2_7"/>
<dbReference type="OrthoDB" id="9805609at2"/>
<dbReference type="Proteomes" id="UP000002714">
    <property type="component" value="Chromosome"/>
</dbReference>
<dbReference type="GO" id="GO:1990904">
    <property type="term" value="C:ribonucleoprotein complex"/>
    <property type="evidence" value="ECO:0007669"/>
    <property type="project" value="UniProtKB-KW"/>
</dbReference>
<dbReference type="GO" id="GO:0005840">
    <property type="term" value="C:ribosome"/>
    <property type="evidence" value="ECO:0007669"/>
    <property type="project" value="UniProtKB-KW"/>
</dbReference>
<dbReference type="GO" id="GO:0003735">
    <property type="term" value="F:structural constituent of ribosome"/>
    <property type="evidence" value="ECO:0007669"/>
    <property type="project" value="InterPro"/>
</dbReference>
<dbReference type="GO" id="GO:0006412">
    <property type="term" value="P:translation"/>
    <property type="evidence" value="ECO:0007669"/>
    <property type="project" value="UniProtKB-UniRule"/>
</dbReference>
<dbReference type="Gene3D" id="2.30.170.40">
    <property type="entry name" value="Ribosomal protein L28/L24"/>
    <property type="match status" value="1"/>
</dbReference>
<dbReference type="HAMAP" id="MF_00373">
    <property type="entry name" value="Ribosomal_bL28"/>
    <property type="match status" value="1"/>
</dbReference>
<dbReference type="InterPro" id="IPR050096">
    <property type="entry name" value="Bacterial_rp_bL28"/>
</dbReference>
<dbReference type="InterPro" id="IPR026569">
    <property type="entry name" value="Ribosomal_bL28"/>
</dbReference>
<dbReference type="InterPro" id="IPR034704">
    <property type="entry name" value="Ribosomal_bL28/bL31-like_sf"/>
</dbReference>
<dbReference type="InterPro" id="IPR001383">
    <property type="entry name" value="Ribosomal_bL28_bact-type"/>
</dbReference>
<dbReference type="InterPro" id="IPR037147">
    <property type="entry name" value="Ribosomal_bL28_sf"/>
</dbReference>
<dbReference type="NCBIfam" id="TIGR00009">
    <property type="entry name" value="L28"/>
    <property type="match status" value="1"/>
</dbReference>
<dbReference type="PANTHER" id="PTHR39080">
    <property type="entry name" value="50S RIBOSOMAL PROTEIN L28"/>
    <property type="match status" value="1"/>
</dbReference>
<dbReference type="PANTHER" id="PTHR39080:SF1">
    <property type="entry name" value="LARGE RIBOSOMAL SUBUNIT PROTEIN BL28A"/>
    <property type="match status" value="1"/>
</dbReference>
<dbReference type="Pfam" id="PF00830">
    <property type="entry name" value="Ribosomal_L28"/>
    <property type="match status" value="1"/>
</dbReference>
<dbReference type="SUPFAM" id="SSF143800">
    <property type="entry name" value="L28p-like"/>
    <property type="match status" value="1"/>
</dbReference>